<name>RECO_YERPS</name>
<proteinExistence type="inferred from homology"/>
<keyword id="KW-0227">DNA damage</keyword>
<keyword id="KW-0233">DNA recombination</keyword>
<keyword id="KW-0234">DNA repair</keyword>
<reference key="1">
    <citation type="journal article" date="2004" name="Proc. Natl. Acad. Sci. U.S.A.">
        <title>Insights into the evolution of Yersinia pestis through whole-genome comparison with Yersinia pseudotuberculosis.</title>
        <authorList>
            <person name="Chain P.S.G."/>
            <person name="Carniel E."/>
            <person name="Larimer F.W."/>
            <person name="Lamerdin J."/>
            <person name="Stoutland P.O."/>
            <person name="Regala W.M."/>
            <person name="Georgescu A.M."/>
            <person name="Vergez L.M."/>
            <person name="Land M.L."/>
            <person name="Motin V.L."/>
            <person name="Brubaker R.R."/>
            <person name="Fowler J."/>
            <person name="Hinnebusch J."/>
            <person name="Marceau M."/>
            <person name="Medigue C."/>
            <person name="Simonet M."/>
            <person name="Chenal-Francisque V."/>
            <person name="Souza B."/>
            <person name="Dacheux D."/>
            <person name="Elliott J.M."/>
            <person name="Derbise A."/>
            <person name="Hauser L.J."/>
            <person name="Garcia E."/>
        </authorList>
    </citation>
    <scope>NUCLEOTIDE SEQUENCE [LARGE SCALE GENOMIC DNA]</scope>
    <source>
        <strain>IP32953</strain>
    </source>
</reference>
<organism>
    <name type="scientific">Yersinia pseudotuberculosis serotype I (strain IP32953)</name>
    <dbReference type="NCBI Taxonomy" id="273123"/>
    <lineage>
        <taxon>Bacteria</taxon>
        <taxon>Pseudomonadati</taxon>
        <taxon>Pseudomonadota</taxon>
        <taxon>Gammaproteobacteria</taxon>
        <taxon>Enterobacterales</taxon>
        <taxon>Yersiniaceae</taxon>
        <taxon>Yersinia</taxon>
    </lineage>
</organism>
<gene>
    <name evidence="1" type="primary">recO</name>
    <name type="ordered locus">YPTB2888</name>
</gene>
<protein>
    <recommendedName>
        <fullName evidence="1">DNA repair protein RecO</fullName>
    </recommendedName>
    <alternativeName>
        <fullName evidence="1">Recombination protein O</fullName>
    </alternativeName>
</protein>
<feature type="chain" id="PRO_0000205032" description="DNA repair protein RecO">
    <location>
        <begin position="1"/>
        <end position="241"/>
    </location>
</feature>
<accession>Q667V3</accession>
<sequence>MDGWQRAFVLHGRPYSETSLMLDLFTEGEGRMRVLAKGARGRRSNLKGCLQPFTPLLVRWSGRGEVKTLRSAEPVSLALPLSGSMLYSGLYVNELLSRVLEHQTSYSALFFDYLHCLQALAGSDGSPEHALRQFELAMLANLGYGVDFLHCAGSGQPVSDTMTYRYREEKGFIASLVVDHYSFTGRQLLALANREFPDADTLRAAKRFTRIALKPYLGGKPLKSRELFRQFVIKPPADPSP</sequence>
<evidence type="ECO:0000255" key="1">
    <source>
        <dbReference type="HAMAP-Rule" id="MF_00201"/>
    </source>
</evidence>
<comment type="function">
    <text evidence="1">Involved in DNA repair and RecF pathway recombination.</text>
</comment>
<comment type="similarity">
    <text evidence="1">Belongs to the RecO family.</text>
</comment>
<dbReference type="EMBL" id="BX936398">
    <property type="protein sequence ID" value="CAH22126.1"/>
    <property type="molecule type" value="Genomic_DNA"/>
</dbReference>
<dbReference type="RefSeq" id="WP_002209680.1">
    <property type="nucleotide sequence ID" value="NZ_CP009712.1"/>
</dbReference>
<dbReference type="SMR" id="Q667V3"/>
<dbReference type="GeneID" id="57975971"/>
<dbReference type="KEGG" id="ypo:BZ17_3743"/>
<dbReference type="KEGG" id="yps:YPTB2888"/>
<dbReference type="PATRIC" id="fig|273123.14.peg.3925"/>
<dbReference type="Proteomes" id="UP000001011">
    <property type="component" value="Chromosome"/>
</dbReference>
<dbReference type="GO" id="GO:0043590">
    <property type="term" value="C:bacterial nucleoid"/>
    <property type="evidence" value="ECO:0007669"/>
    <property type="project" value="TreeGrafter"/>
</dbReference>
<dbReference type="GO" id="GO:0006310">
    <property type="term" value="P:DNA recombination"/>
    <property type="evidence" value="ECO:0007669"/>
    <property type="project" value="UniProtKB-UniRule"/>
</dbReference>
<dbReference type="GO" id="GO:0006302">
    <property type="term" value="P:double-strand break repair"/>
    <property type="evidence" value="ECO:0007669"/>
    <property type="project" value="TreeGrafter"/>
</dbReference>
<dbReference type="Gene3D" id="2.40.50.140">
    <property type="entry name" value="Nucleic acid-binding proteins"/>
    <property type="match status" value="1"/>
</dbReference>
<dbReference type="Gene3D" id="1.20.1440.120">
    <property type="entry name" value="Recombination protein O, C-terminal domain"/>
    <property type="match status" value="1"/>
</dbReference>
<dbReference type="HAMAP" id="MF_00201">
    <property type="entry name" value="RecO"/>
    <property type="match status" value="1"/>
</dbReference>
<dbReference type="InterPro" id="IPR037278">
    <property type="entry name" value="ARFGAP/RecO"/>
</dbReference>
<dbReference type="InterPro" id="IPR022572">
    <property type="entry name" value="DNA_rep/recomb_RecO_N"/>
</dbReference>
<dbReference type="InterPro" id="IPR012340">
    <property type="entry name" value="NA-bd_OB-fold"/>
</dbReference>
<dbReference type="InterPro" id="IPR003717">
    <property type="entry name" value="RecO"/>
</dbReference>
<dbReference type="InterPro" id="IPR042242">
    <property type="entry name" value="RecO_C"/>
</dbReference>
<dbReference type="NCBIfam" id="TIGR00613">
    <property type="entry name" value="reco"/>
    <property type="match status" value="1"/>
</dbReference>
<dbReference type="PANTHER" id="PTHR33991">
    <property type="entry name" value="DNA REPAIR PROTEIN RECO"/>
    <property type="match status" value="1"/>
</dbReference>
<dbReference type="PANTHER" id="PTHR33991:SF1">
    <property type="entry name" value="DNA REPAIR PROTEIN RECO"/>
    <property type="match status" value="1"/>
</dbReference>
<dbReference type="Pfam" id="PF02565">
    <property type="entry name" value="RecO_C"/>
    <property type="match status" value="1"/>
</dbReference>
<dbReference type="Pfam" id="PF11967">
    <property type="entry name" value="RecO_N"/>
    <property type="match status" value="1"/>
</dbReference>
<dbReference type="SUPFAM" id="SSF57863">
    <property type="entry name" value="ArfGap/RecO-like zinc finger"/>
    <property type="match status" value="1"/>
</dbReference>
<dbReference type="SUPFAM" id="SSF50249">
    <property type="entry name" value="Nucleic acid-binding proteins"/>
    <property type="match status" value="1"/>
</dbReference>